<accession>Q7T3S3</accession>
<name>CHSTB_DANRE</name>
<evidence type="ECO:0000250" key="1"/>
<evidence type="ECO:0000255" key="2"/>
<evidence type="ECO:0000305" key="3"/>
<protein>
    <recommendedName>
        <fullName>Carbohydrate sulfotransferase 11</fullName>
        <ecNumber>2.8.2.5</ecNumber>
    </recommendedName>
    <alternativeName>
        <fullName>Chondroitin 4-O-sulfotransferase 1</fullName>
    </alternativeName>
    <alternativeName>
        <fullName>Chondroitin 4-sulfotransferase 1</fullName>
        <shortName>C4ST-1</shortName>
        <shortName>C4ST1</shortName>
        <shortName>zC4ST-1</shortName>
    </alternativeName>
</protein>
<keyword id="KW-0119">Carbohydrate metabolism</keyword>
<keyword id="KW-0325">Glycoprotein</keyword>
<keyword id="KW-0333">Golgi apparatus</keyword>
<keyword id="KW-0472">Membrane</keyword>
<keyword id="KW-1185">Reference proteome</keyword>
<keyword id="KW-0735">Signal-anchor</keyword>
<keyword id="KW-0808">Transferase</keyword>
<keyword id="KW-0812">Transmembrane</keyword>
<keyword id="KW-1133">Transmembrane helix</keyword>
<gene>
    <name type="primary">chst11</name>
</gene>
<proteinExistence type="evidence at transcript level"/>
<feature type="chain" id="PRO_0000189667" description="Carbohydrate sulfotransferase 11">
    <location>
        <begin position="1"/>
        <end position="352"/>
    </location>
</feature>
<feature type="topological domain" description="Cytoplasmic" evidence="2">
    <location>
        <begin position="1"/>
        <end position="16"/>
    </location>
</feature>
<feature type="transmembrane region" description="Helical; Signal-anchor for type II membrane protein" evidence="2">
    <location>
        <begin position="17"/>
        <end position="37"/>
    </location>
</feature>
<feature type="topological domain" description="Lumenal" evidence="2">
    <location>
        <begin position="38"/>
        <end position="352"/>
    </location>
</feature>
<feature type="binding site" evidence="1">
    <location>
        <begin position="124"/>
        <end position="130"/>
    </location>
    <ligand>
        <name>3'-phosphoadenylyl sulfate</name>
        <dbReference type="ChEBI" id="CHEBI:58339"/>
    </ligand>
</feature>
<feature type="binding site" evidence="1">
    <location>
        <begin position="186"/>
        <end position="194"/>
    </location>
    <ligand>
        <name>3'-phosphoadenylyl sulfate</name>
        <dbReference type="ChEBI" id="CHEBI:58339"/>
    </ligand>
</feature>
<feature type="glycosylation site" description="N-linked (GlcNAc...) asparagine" evidence="2">
    <location>
        <position position="205"/>
    </location>
</feature>
<feature type="glycosylation site" description="N-linked (GlcNAc...) asparagine" evidence="2">
    <location>
        <position position="223"/>
    </location>
</feature>
<feature type="glycosylation site" description="N-linked (GlcNAc...) asparagine" evidence="2">
    <location>
        <position position="321"/>
    </location>
</feature>
<feature type="glycosylation site" description="N-linked (GlcNAc...) asparagine" evidence="2">
    <location>
        <position position="342"/>
    </location>
</feature>
<reference key="1">
    <citation type="submission" date="2002-11" db="EMBL/GenBank/DDBJ databases">
        <title>Molecular cloning and expression of zebrafish chondroitin 4-sulfotransferase.</title>
        <authorList>
            <person name="Kobayashi N."/>
            <person name="Mizumoto S."/>
            <person name="Mikami T."/>
            <person name="Kitagawa H."/>
            <person name="Sugahara K."/>
        </authorList>
    </citation>
    <scope>NUCLEOTIDE SEQUENCE [MRNA]</scope>
</reference>
<dbReference type="EC" id="2.8.2.5"/>
<dbReference type="EMBL" id="AB097217">
    <property type="protein sequence ID" value="BAC76973.1"/>
    <property type="molecule type" value="mRNA"/>
</dbReference>
<dbReference type="FunCoup" id="Q7T3S3">
    <property type="interactions" value="686"/>
</dbReference>
<dbReference type="STRING" id="7955.ENSDARP00000042962"/>
<dbReference type="GlyCosmos" id="Q7T3S3">
    <property type="glycosylation" value="4 sites, No reported glycans"/>
</dbReference>
<dbReference type="PaxDb" id="7955-ENSDARP00000042962"/>
<dbReference type="AGR" id="ZFIN:ZDB-GENE-040315-1"/>
<dbReference type="ZFIN" id="ZDB-GENE-040315-1">
    <property type="gene designation" value="chst11"/>
</dbReference>
<dbReference type="eggNOG" id="KOG4651">
    <property type="taxonomic scope" value="Eukaryota"/>
</dbReference>
<dbReference type="InParanoid" id="Q7T3S3"/>
<dbReference type="PhylomeDB" id="Q7T3S3"/>
<dbReference type="BRENDA" id="2.8.2.5">
    <property type="organism ID" value="928"/>
</dbReference>
<dbReference type="Reactome" id="R-DRE-2022870">
    <property type="pathway name" value="Chondroitin sulfate biosynthesis"/>
</dbReference>
<dbReference type="PRO" id="PR:Q7T3S3"/>
<dbReference type="Proteomes" id="UP000000437">
    <property type="component" value="Unplaced"/>
</dbReference>
<dbReference type="GO" id="GO:0000139">
    <property type="term" value="C:Golgi membrane"/>
    <property type="evidence" value="ECO:0007669"/>
    <property type="project" value="UniProtKB-SubCell"/>
</dbReference>
<dbReference type="GO" id="GO:0047756">
    <property type="term" value="F:chondroitin 4-sulfotransferase activity"/>
    <property type="evidence" value="ECO:0000314"/>
    <property type="project" value="ZFIN"/>
</dbReference>
<dbReference type="GO" id="GO:0008146">
    <property type="term" value="F:sulfotransferase activity"/>
    <property type="evidence" value="ECO:0000318"/>
    <property type="project" value="GO_Central"/>
</dbReference>
<dbReference type="GO" id="GO:0016051">
    <property type="term" value="P:carbohydrate biosynthetic process"/>
    <property type="evidence" value="ECO:0007669"/>
    <property type="project" value="InterPro"/>
</dbReference>
<dbReference type="GO" id="GO:0050650">
    <property type="term" value="P:chondroitin sulfate proteoglycan biosynthetic process"/>
    <property type="evidence" value="ECO:0000315"/>
    <property type="project" value="ZFIN"/>
</dbReference>
<dbReference type="GO" id="GO:0008045">
    <property type="term" value="P:motor neuron axon guidance"/>
    <property type="evidence" value="ECO:0000315"/>
    <property type="project" value="ZFIN"/>
</dbReference>
<dbReference type="GO" id="GO:0007517">
    <property type="term" value="P:muscle organ development"/>
    <property type="evidence" value="ECO:0000315"/>
    <property type="project" value="ZFIN"/>
</dbReference>
<dbReference type="GO" id="GO:0030166">
    <property type="term" value="P:proteoglycan biosynthetic process"/>
    <property type="evidence" value="ECO:0000318"/>
    <property type="project" value="GO_Central"/>
</dbReference>
<dbReference type="InterPro" id="IPR018011">
    <property type="entry name" value="Carb_sulfotrans_8-10"/>
</dbReference>
<dbReference type="InterPro" id="IPR005331">
    <property type="entry name" value="Sulfotransferase"/>
</dbReference>
<dbReference type="PANTHER" id="PTHR12137">
    <property type="entry name" value="CARBOHYDRATE SULFOTRANSFERASE"/>
    <property type="match status" value="1"/>
</dbReference>
<dbReference type="PANTHER" id="PTHR12137:SF32">
    <property type="entry name" value="CARBOHYDRATE SULFOTRANSFERASE 11"/>
    <property type="match status" value="1"/>
</dbReference>
<dbReference type="Pfam" id="PF03567">
    <property type="entry name" value="Sulfotransfer_2"/>
    <property type="match status" value="1"/>
</dbReference>
<sequence length="352" mass="40998">MKQTILDLMRMSRICRMVLATCLGSFILVIFYFQSMFQPVMRRNPFAAEGCCRKGSRNALQELYNPTQAEFSAAAVLHQARRDQVAETCRAHSASSRKRRVLTPSDLKHLVVDEDHELIYCYVPKVACTNWKRVMMVLSGRGKYSNPMEIPSNEAHVPSNLKTLNQYSIPDINHRLKNYLKFLFVREPFERLVSAYRNKFTLRYNTSFHKRYGTKIVRRYRKNATTEALQSGADVKFQEFAEYLVDPGTQREAPLNEHWQTVYSLCHPCHIHYDLVGKYETLEDDANYVLKLVGEGDSLRFPSFAKSTRTTDQMAAMFFGNISSQQQSQLYQLYKLDYLMFNYSIPSYLKLQ</sequence>
<organism>
    <name type="scientific">Danio rerio</name>
    <name type="common">Zebrafish</name>
    <name type="synonym">Brachydanio rerio</name>
    <dbReference type="NCBI Taxonomy" id="7955"/>
    <lineage>
        <taxon>Eukaryota</taxon>
        <taxon>Metazoa</taxon>
        <taxon>Chordata</taxon>
        <taxon>Craniata</taxon>
        <taxon>Vertebrata</taxon>
        <taxon>Euteleostomi</taxon>
        <taxon>Actinopterygii</taxon>
        <taxon>Neopterygii</taxon>
        <taxon>Teleostei</taxon>
        <taxon>Ostariophysi</taxon>
        <taxon>Cypriniformes</taxon>
        <taxon>Danionidae</taxon>
        <taxon>Danioninae</taxon>
        <taxon>Danio</taxon>
    </lineage>
</organism>
<comment type="function">
    <text evidence="1">Catalyzes the transfer of sulfate to position 4 of the N-acetylgalactosamine (GalNAc) residue of chondroitin.</text>
</comment>
<comment type="catalytic activity">
    <reaction>
        <text>chondroitin beta-D-glucuronate + n 3'-phosphoadenylyl sulfate = chondroitin 4'-sulfate + n adenosine 3',5'-bisphosphate + n H(+)</text>
        <dbReference type="Rhea" id="RHEA:16101"/>
        <dbReference type="Rhea" id="RHEA-COMP:9827"/>
        <dbReference type="Rhea" id="RHEA-COMP:9829"/>
        <dbReference type="ChEBI" id="CHEBI:15378"/>
        <dbReference type="ChEBI" id="CHEBI:57652"/>
        <dbReference type="ChEBI" id="CHEBI:58339"/>
        <dbReference type="ChEBI" id="CHEBI:58343"/>
        <dbReference type="ChEBI" id="CHEBI:58422"/>
        <dbReference type="EC" id="2.8.2.5"/>
    </reaction>
</comment>
<comment type="subcellular location">
    <subcellularLocation>
        <location evidence="1">Golgi apparatus membrane</location>
        <topology evidence="1">Single-pass type II membrane protein</topology>
    </subcellularLocation>
</comment>
<comment type="similarity">
    <text evidence="3">Belongs to the sulfotransferase 2 family.</text>
</comment>